<accession>B7M8H6</accession>
<name>ACPS_ECO8A</name>
<feature type="chain" id="PRO_1000117350" description="Holo-[acyl-carrier-protein] synthase">
    <location>
        <begin position="1"/>
        <end position="126"/>
    </location>
</feature>
<feature type="binding site" evidence="1">
    <location>
        <position position="9"/>
    </location>
    <ligand>
        <name>Mg(2+)</name>
        <dbReference type="ChEBI" id="CHEBI:18420"/>
    </ligand>
</feature>
<feature type="binding site" evidence="1">
    <location>
        <position position="58"/>
    </location>
    <ligand>
        <name>Mg(2+)</name>
        <dbReference type="ChEBI" id="CHEBI:18420"/>
    </ligand>
</feature>
<dbReference type="EC" id="2.7.8.7" evidence="1"/>
<dbReference type="EMBL" id="CU928160">
    <property type="protein sequence ID" value="CAQ99512.1"/>
    <property type="molecule type" value="Genomic_DNA"/>
</dbReference>
<dbReference type="RefSeq" id="WP_000986029.1">
    <property type="nucleotide sequence ID" value="NC_011741.1"/>
</dbReference>
<dbReference type="SMR" id="B7M8H6"/>
<dbReference type="GeneID" id="93774528"/>
<dbReference type="KEGG" id="ecr:ECIAI1_2674"/>
<dbReference type="HOGENOM" id="CLU_089696_3_1_6"/>
<dbReference type="GO" id="GO:0005737">
    <property type="term" value="C:cytoplasm"/>
    <property type="evidence" value="ECO:0007669"/>
    <property type="project" value="UniProtKB-SubCell"/>
</dbReference>
<dbReference type="GO" id="GO:0008897">
    <property type="term" value="F:holo-[acyl-carrier-protein] synthase activity"/>
    <property type="evidence" value="ECO:0007669"/>
    <property type="project" value="UniProtKB-UniRule"/>
</dbReference>
<dbReference type="GO" id="GO:0000287">
    <property type="term" value="F:magnesium ion binding"/>
    <property type="evidence" value="ECO:0007669"/>
    <property type="project" value="UniProtKB-UniRule"/>
</dbReference>
<dbReference type="GO" id="GO:0006633">
    <property type="term" value="P:fatty acid biosynthetic process"/>
    <property type="evidence" value="ECO:0007669"/>
    <property type="project" value="UniProtKB-UniRule"/>
</dbReference>
<dbReference type="FunFam" id="3.90.470.20:FF:000001">
    <property type="entry name" value="Holo-[acyl-carrier-protein] synthase"/>
    <property type="match status" value="1"/>
</dbReference>
<dbReference type="Gene3D" id="3.90.470.20">
    <property type="entry name" value="4'-phosphopantetheinyl transferase domain"/>
    <property type="match status" value="1"/>
</dbReference>
<dbReference type="HAMAP" id="MF_00101">
    <property type="entry name" value="AcpS"/>
    <property type="match status" value="1"/>
</dbReference>
<dbReference type="InterPro" id="IPR008278">
    <property type="entry name" value="4-PPantetheinyl_Trfase_dom"/>
</dbReference>
<dbReference type="InterPro" id="IPR037143">
    <property type="entry name" value="4-PPantetheinyl_Trfase_dom_sf"/>
</dbReference>
<dbReference type="InterPro" id="IPR002582">
    <property type="entry name" value="ACPS"/>
</dbReference>
<dbReference type="InterPro" id="IPR004568">
    <property type="entry name" value="Ppantetheine-prot_Trfase_dom"/>
</dbReference>
<dbReference type="NCBIfam" id="TIGR00516">
    <property type="entry name" value="acpS"/>
    <property type="match status" value="1"/>
</dbReference>
<dbReference type="NCBIfam" id="TIGR00556">
    <property type="entry name" value="pantethn_trn"/>
    <property type="match status" value="1"/>
</dbReference>
<dbReference type="Pfam" id="PF01648">
    <property type="entry name" value="ACPS"/>
    <property type="match status" value="1"/>
</dbReference>
<dbReference type="SUPFAM" id="SSF56214">
    <property type="entry name" value="4'-phosphopantetheinyl transferase"/>
    <property type="match status" value="1"/>
</dbReference>
<sequence>MAILGLGTDIVEIARIEAVIARSGERLARRVLSDNEWAIWKTHHQPVRFLAKRFAVKEAAAKAFGTGIRNGLAFNQFEVFNDELGKPRLRLWGEALKLAEKLGVVNMHVTLADERHYACATVIIES</sequence>
<keyword id="KW-0963">Cytoplasm</keyword>
<keyword id="KW-0275">Fatty acid biosynthesis</keyword>
<keyword id="KW-0276">Fatty acid metabolism</keyword>
<keyword id="KW-0444">Lipid biosynthesis</keyword>
<keyword id="KW-0443">Lipid metabolism</keyword>
<keyword id="KW-0460">Magnesium</keyword>
<keyword id="KW-0479">Metal-binding</keyword>
<keyword id="KW-0808">Transferase</keyword>
<reference key="1">
    <citation type="journal article" date="2009" name="PLoS Genet.">
        <title>Organised genome dynamics in the Escherichia coli species results in highly diverse adaptive paths.</title>
        <authorList>
            <person name="Touchon M."/>
            <person name="Hoede C."/>
            <person name="Tenaillon O."/>
            <person name="Barbe V."/>
            <person name="Baeriswyl S."/>
            <person name="Bidet P."/>
            <person name="Bingen E."/>
            <person name="Bonacorsi S."/>
            <person name="Bouchier C."/>
            <person name="Bouvet O."/>
            <person name="Calteau A."/>
            <person name="Chiapello H."/>
            <person name="Clermont O."/>
            <person name="Cruveiller S."/>
            <person name="Danchin A."/>
            <person name="Diard M."/>
            <person name="Dossat C."/>
            <person name="Karoui M.E."/>
            <person name="Frapy E."/>
            <person name="Garry L."/>
            <person name="Ghigo J.M."/>
            <person name="Gilles A.M."/>
            <person name="Johnson J."/>
            <person name="Le Bouguenec C."/>
            <person name="Lescat M."/>
            <person name="Mangenot S."/>
            <person name="Martinez-Jehanne V."/>
            <person name="Matic I."/>
            <person name="Nassif X."/>
            <person name="Oztas S."/>
            <person name="Petit M.A."/>
            <person name="Pichon C."/>
            <person name="Rouy Z."/>
            <person name="Ruf C.S."/>
            <person name="Schneider D."/>
            <person name="Tourret J."/>
            <person name="Vacherie B."/>
            <person name="Vallenet D."/>
            <person name="Medigue C."/>
            <person name="Rocha E.P.C."/>
            <person name="Denamur E."/>
        </authorList>
    </citation>
    <scope>NUCLEOTIDE SEQUENCE [LARGE SCALE GENOMIC DNA]</scope>
    <source>
        <strain>IAI1</strain>
    </source>
</reference>
<protein>
    <recommendedName>
        <fullName evidence="1">Holo-[acyl-carrier-protein] synthase</fullName>
        <shortName evidence="1">Holo-ACP synthase</shortName>
        <ecNumber evidence="1">2.7.8.7</ecNumber>
    </recommendedName>
    <alternativeName>
        <fullName evidence="1">4'-phosphopantetheinyl transferase AcpS</fullName>
    </alternativeName>
</protein>
<proteinExistence type="inferred from homology"/>
<gene>
    <name evidence="1" type="primary">acpS</name>
    <name type="ordered locus">ECIAI1_2674</name>
</gene>
<comment type="function">
    <text evidence="1">Transfers the 4'-phosphopantetheine moiety from coenzyme A to a Ser of acyl-carrier-protein.</text>
</comment>
<comment type="catalytic activity">
    <reaction evidence="1">
        <text>apo-[ACP] + CoA = holo-[ACP] + adenosine 3',5'-bisphosphate + H(+)</text>
        <dbReference type="Rhea" id="RHEA:12068"/>
        <dbReference type="Rhea" id="RHEA-COMP:9685"/>
        <dbReference type="Rhea" id="RHEA-COMP:9690"/>
        <dbReference type="ChEBI" id="CHEBI:15378"/>
        <dbReference type="ChEBI" id="CHEBI:29999"/>
        <dbReference type="ChEBI" id="CHEBI:57287"/>
        <dbReference type="ChEBI" id="CHEBI:58343"/>
        <dbReference type="ChEBI" id="CHEBI:64479"/>
        <dbReference type="EC" id="2.7.8.7"/>
    </reaction>
</comment>
<comment type="cofactor">
    <cofactor evidence="1">
        <name>Mg(2+)</name>
        <dbReference type="ChEBI" id="CHEBI:18420"/>
    </cofactor>
</comment>
<comment type="subcellular location">
    <subcellularLocation>
        <location evidence="1">Cytoplasm</location>
    </subcellularLocation>
</comment>
<comment type="similarity">
    <text evidence="1">Belongs to the P-Pant transferase superfamily. AcpS family.</text>
</comment>
<organism>
    <name type="scientific">Escherichia coli O8 (strain IAI1)</name>
    <dbReference type="NCBI Taxonomy" id="585034"/>
    <lineage>
        <taxon>Bacteria</taxon>
        <taxon>Pseudomonadati</taxon>
        <taxon>Pseudomonadota</taxon>
        <taxon>Gammaproteobacteria</taxon>
        <taxon>Enterobacterales</taxon>
        <taxon>Enterobacteriaceae</taxon>
        <taxon>Escherichia</taxon>
    </lineage>
</organism>
<evidence type="ECO:0000255" key="1">
    <source>
        <dbReference type="HAMAP-Rule" id="MF_00101"/>
    </source>
</evidence>